<keyword id="KW-0256">Endoplasmic reticulum</keyword>
<keyword id="KW-0456">Lyase</keyword>
<keyword id="KW-0472">Membrane</keyword>
<keyword id="KW-0521">NADP</keyword>
<keyword id="KW-1185">Reference proteome</keyword>
<keyword id="KW-0812">Transmembrane</keyword>
<keyword id="KW-1133">Transmembrane helix</keyword>
<reference key="1">
    <citation type="journal article" date="2005" name="PLoS Biol.">
        <title>The genomes of Oryza sativa: a history of duplications.</title>
        <authorList>
            <person name="Yu J."/>
            <person name="Wang J."/>
            <person name="Lin W."/>
            <person name="Li S."/>
            <person name="Li H."/>
            <person name="Zhou J."/>
            <person name="Ni P."/>
            <person name="Dong W."/>
            <person name="Hu S."/>
            <person name="Zeng C."/>
            <person name="Zhang J."/>
            <person name="Zhang Y."/>
            <person name="Li R."/>
            <person name="Xu Z."/>
            <person name="Li S."/>
            <person name="Li X."/>
            <person name="Zheng H."/>
            <person name="Cong L."/>
            <person name="Lin L."/>
            <person name="Yin J."/>
            <person name="Geng J."/>
            <person name="Li G."/>
            <person name="Shi J."/>
            <person name="Liu J."/>
            <person name="Lv H."/>
            <person name="Li J."/>
            <person name="Wang J."/>
            <person name="Deng Y."/>
            <person name="Ran L."/>
            <person name="Shi X."/>
            <person name="Wang X."/>
            <person name="Wu Q."/>
            <person name="Li C."/>
            <person name="Ren X."/>
            <person name="Wang J."/>
            <person name="Wang X."/>
            <person name="Li D."/>
            <person name="Liu D."/>
            <person name="Zhang X."/>
            <person name="Ji Z."/>
            <person name="Zhao W."/>
            <person name="Sun Y."/>
            <person name="Zhang Z."/>
            <person name="Bao J."/>
            <person name="Han Y."/>
            <person name="Dong L."/>
            <person name="Ji J."/>
            <person name="Chen P."/>
            <person name="Wu S."/>
            <person name="Liu J."/>
            <person name="Xiao Y."/>
            <person name="Bu D."/>
            <person name="Tan J."/>
            <person name="Yang L."/>
            <person name="Ye C."/>
            <person name="Zhang J."/>
            <person name="Xu J."/>
            <person name="Zhou Y."/>
            <person name="Yu Y."/>
            <person name="Zhang B."/>
            <person name="Zhuang S."/>
            <person name="Wei H."/>
            <person name="Liu B."/>
            <person name="Lei M."/>
            <person name="Yu H."/>
            <person name="Li Y."/>
            <person name="Xu H."/>
            <person name="Wei S."/>
            <person name="He X."/>
            <person name="Fang L."/>
            <person name="Zhang Z."/>
            <person name="Zhang Y."/>
            <person name="Huang X."/>
            <person name="Su Z."/>
            <person name="Tong W."/>
            <person name="Li J."/>
            <person name="Tong Z."/>
            <person name="Li S."/>
            <person name="Ye J."/>
            <person name="Wang L."/>
            <person name="Fang L."/>
            <person name="Lei T."/>
            <person name="Chen C.-S."/>
            <person name="Chen H.-C."/>
            <person name="Xu Z."/>
            <person name="Li H."/>
            <person name="Huang H."/>
            <person name="Zhang F."/>
            <person name="Xu H."/>
            <person name="Li N."/>
            <person name="Zhao C."/>
            <person name="Li S."/>
            <person name="Dong L."/>
            <person name="Huang Y."/>
            <person name="Li L."/>
            <person name="Xi Y."/>
            <person name="Qi Q."/>
            <person name="Li W."/>
            <person name="Zhang B."/>
            <person name="Hu W."/>
            <person name="Zhang Y."/>
            <person name="Tian X."/>
            <person name="Jiao Y."/>
            <person name="Liang X."/>
            <person name="Jin J."/>
            <person name="Gao L."/>
            <person name="Zheng W."/>
            <person name="Hao B."/>
            <person name="Liu S.-M."/>
            <person name="Wang W."/>
            <person name="Yuan L."/>
            <person name="Cao M."/>
            <person name="McDermott J."/>
            <person name="Samudrala R."/>
            <person name="Wang J."/>
            <person name="Wong G.K.-S."/>
            <person name="Yang H."/>
        </authorList>
    </citation>
    <scope>NUCLEOTIDE SEQUENCE [LARGE SCALE GENOMIC DNA]</scope>
    <source>
        <strain>cv. 93-11</strain>
    </source>
</reference>
<dbReference type="EC" id="4.1.99.5" evidence="1"/>
<dbReference type="EMBL" id="CM000132">
    <property type="protein sequence ID" value="EEC81368.1"/>
    <property type="status" value="ALT_INIT"/>
    <property type="molecule type" value="Genomic_DNA"/>
</dbReference>
<dbReference type="SMR" id="B8B6I2"/>
<dbReference type="STRING" id="39946.B8B6I2"/>
<dbReference type="HOGENOM" id="CLU_047036_5_3_1"/>
<dbReference type="Proteomes" id="UP000007015">
    <property type="component" value="Chromosome 7"/>
</dbReference>
<dbReference type="GO" id="GO:0005789">
    <property type="term" value="C:endoplasmic reticulum membrane"/>
    <property type="evidence" value="ECO:0007669"/>
    <property type="project" value="UniProtKB-SubCell"/>
</dbReference>
<dbReference type="GO" id="GO:0071771">
    <property type="term" value="F:aldehyde oxygenase (deformylating) activity"/>
    <property type="evidence" value="ECO:0007669"/>
    <property type="project" value="UniProtKB-EC"/>
</dbReference>
<dbReference type="GO" id="GO:0005506">
    <property type="term" value="F:iron ion binding"/>
    <property type="evidence" value="ECO:0007669"/>
    <property type="project" value="InterPro"/>
</dbReference>
<dbReference type="GO" id="GO:0016491">
    <property type="term" value="F:oxidoreductase activity"/>
    <property type="evidence" value="ECO:0007669"/>
    <property type="project" value="InterPro"/>
</dbReference>
<dbReference type="GO" id="GO:0008610">
    <property type="term" value="P:lipid biosynthetic process"/>
    <property type="evidence" value="ECO:0007669"/>
    <property type="project" value="InterPro"/>
</dbReference>
<dbReference type="InterPro" id="IPR006694">
    <property type="entry name" value="Fatty_acid_hydroxylase"/>
</dbReference>
<dbReference type="InterPro" id="IPR050307">
    <property type="entry name" value="Sterol_Desaturase_Related"/>
</dbReference>
<dbReference type="PANTHER" id="PTHR11863">
    <property type="entry name" value="STEROL DESATURASE"/>
    <property type="match status" value="1"/>
</dbReference>
<dbReference type="Pfam" id="PF04116">
    <property type="entry name" value="FA_hydroxylase"/>
    <property type="match status" value="1"/>
</dbReference>
<name>GLO18_ORYSI</name>
<feature type="chain" id="PRO_0000445881" description="Very-long-chain aldehyde decarbonylase GL1-8">
    <location>
        <begin position="1"/>
        <end position="268"/>
    </location>
</feature>
<feature type="transmembrane region" description="Helical" evidence="2">
    <location>
        <begin position="26"/>
        <end position="46"/>
    </location>
</feature>
<feature type="transmembrane region" description="Helical" evidence="2">
    <location>
        <begin position="70"/>
        <end position="90"/>
    </location>
</feature>
<feature type="transmembrane region" description="Helical" evidence="2">
    <location>
        <begin position="107"/>
        <end position="127"/>
    </location>
</feature>
<feature type="transmembrane region" description="Helical" evidence="2">
    <location>
        <begin position="164"/>
        <end position="184"/>
    </location>
</feature>
<feature type="domain" description="Fatty acid hydroxylase" evidence="2">
    <location>
        <begin position="114"/>
        <end position="249"/>
    </location>
</feature>
<proteinExistence type="inferred from homology"/>
<sequence length="268" mass="31298">MMAAAGLESAWEYLITHFSEFQLASIGTFLLHESVFFLSGLPSLLFERLGLFSKYKIQKKSNTPDYQNRCVVRLVLYHVCVNLPLTILSYRTFKFMGLRSTLPLPHWTVVVSQVLFFFVLEDFIFYWGHRALHTKWLYQHVHSVHHEYATPFGLTSEYAHPAEILFLGFATVAGPALTGPHLFTLWVWMVLRVLETVEAHSGYHFPWSPSNFLPLYGGAEFHDYHHRVLYTKSGNYSSTFIYMDWLFGTDKDYRKTKALEEKERTKHL</sequence>
<organism>
    <name type="scientific">Oryza sativa subsp. indica</name>
    <name type="common">Rice</name>
    <dbReference type="NCBI Taxonomy" id="39946"/>
    <lineage>
        <taxon>Eukaryota</taxon>
        <taxon>Viridiplantae</taxon>
        <taxon>Streptophyta</taxon>
        <taxon>Embryophyta</taxon>
        <taxon>Tracheophyta</taxon>
        <taxon>Spermatophyta</taxon>
        <taxon>Magnoliopsida</taxon>
        <taxon>Liliopsida</taxon>
        <taxon>Poales</taxon>
        <taxon>Poaceae</taxon>
        <taxon>BOP clade</taxon>
        <taxon>Oryzoideae</taxon>
        <taxon>Oryzeae</taxon>
        <taxon>Oryzinae</taxon>
        <taxon>Oryza</taxon>
        <taxon>Oryza sativa</taxon>
    </lineage>
</organism>
<evidence type="ECO:0000250" key="1">
    <source>
        <dbReference type="UniProtKB" id="F4HVY0"/>
    </source>
</evidence>
<evidence type="ECO:0000255" key="2"/>
<evidence type="ECO:0000305" key="3"/>
<evidence type="ECO:0000312" key="4">
    <source>
        <dbReference type="EMBL" id="EEC81368.1"/>
    </source>
</evidence>
<gene>
    <name evidence="3" type="primary">GL18</name>
    <name evidence="4" type="ORF">OsI_24570</name>
</gene>
<accession>B8B6I2</accession>
<protein>
    <recommendedName>
        <fullName evidence="3">Very-long-chain aldehyde decarbonylase GL1-8</fullName>
        <ecNumber evidence="1">4.1.99.5</ecNumber>
    </recommendedName>
    <alternativeName>
        <fullName evidence="3">Protein GLOSSY 1-8</fullName>
    </alternativeName>
</protein>
<comment type="function">
    <text evidence="1">Aldehyde decarbonylase involved in the conversion of aldehydes to alkanes. Core component of a very-long-chain alkane synthesis complex.</text>
</comment>
<comment type="catalytic activity">
    <reaction evidence="1">
        <text>a long-chain fatty aldehyde + 2 NADPH + O2 + H(+) = a long-chain alkane + formate + 2 NADP(+) + H2O</text>
        <dbReference type="Rhea" id="RHEA:21440"/>
        <dbReference type="ChEBI" id="CHEBI:15377"/>
        <dbReference type="ChEBI" id="CHEBI:15378"/>
        <dbReference type="ChEBI" id="CHEBI:15379"/>
        <dbReference type="ChEBI" id="CHEBI:15740"/>
        <dbReference type="ChEBI" id="CHEBI:17176"/>
        <dbReference type="ChEBI" id="CHEBI:57783"/>
        <dbReference type="ChEBI" id="CHEBI:58349"/>
        <dbReference type="ChEBI" id="CHEBI:83563"/>
        <dbReference type="EC" id="4.1.99.5"/>
    </reaction>
</comment>
<comment type="subunit">
    <text evidence="1">Homodimer.</text>
</comment>
<comment type="subcellular location">
    <subcellularLocation>
        <location evidence="1">Endoplasmic reticulum membrane</location>
        <topology evidence="1">Multi-pass membrane protein</topology>
    </subcellularLocation>
</comment>
<comment type="similarity">
    <text evidence="3">Belongs to the sterol desaturase family.</text>
</comment>
<comment type="sequence caution" evidence="3">
    <conflict type="erroneous initiation">
        <sequence resource="EMBL-CDS" id="EEC81368"/>
    </conflict>
    <text>Truncated N-terminus.</text>
</comment>